<gene>
    <name evidence="1" type="primary">secB</name>
    <name type="ordered locus">IL0235</name>
</gene>
<protein>
    <recommendedName>
        <fullName evidence="1">Protein-export protein SecB</fullName>
    </recommendedName>
</protein>
<keyword id="KW-0143">Chaperone</keyword>
<keyword id="KW-0963">Cytoplasm</keyword>
<keyword id="KW-0653">Protein transport</keyword>
<keyword id="KW-1185">Reference proteome</keyword>
<keyword id="KW-0811">Translocation</keyword>
<keyword id="KW-0813">Transport</keyword>
<name>SECB_IDILO</name>
<dbReference type="EMBL" id="AE017340">
    <property type="protein sequence ID" value="AAV81078.1"/>
    <property type="molecule type" value="Genomic_DNA"/>
</dbReference>
<dbReference type="RefSeq" id="WP_011233498.1">
    <property type="nucleotide sequence ID" value="NC_006512.1"/>
</dbReference>
<dbReference type="SMR" id="Q5QZA7"/>
<dbReference type="STRING" id="283942.IL0235"/>
<dbReference type="GeneID" id="41335381"/>
<dbReference type="KEGG" id="ilo:IL0235"/>
<dbReference type="eggNOG" id="COG1952">
    <property type="taxonomic scope" value="Bacteria"/>
</dbReference>
<dbReference type="HOGENOM" id="CLU_111574_1_0_6"/>
<dbReference type="OrthoDB" id="9795145at2"/>
<dbReference type="Proteomes" id="UP000001171">
    <property type="component" value="Chromosome"/>
</dbReference>
<dbReference type="GO" id="GO:0005737">
    <property type="term" value="C:cytoplasm"/>
    <property type="evidence" value="ECO:0007669"/>
    <property type="project" value="UniProtKB-SubCell"/>
</dbReference>
<dbReference type="GO" id="GO:0051082">
    <property type="term" value="F:unfolded protein binding"/>
    <property type="evidence" value="ECO:0007669"/>
    <property type="project" value="InterPro"/>
</dbReference>
<dbReference type="GO" id="GO:0006457">
    <property type="term" value="P:protein folding"/>
    <property type="evidence" value="ECO:0007669"/>
    <property type="project" value="UniProtKB-UniRule"/>
</dbReference>
<dbReference type="GO" id="GO:0051262">
    <property type="term" value="P:protein tetramerization"/>
    <property type="evidence" value="ECO:0007669"/>
    <property type="project" value="InterPro"/>
</dbReference>
<dbReference type="GO" id="GO:0015031">
    <property type="term" value="P:protein transport"/>
    <property type="evidence" value="ECO:0007669"/>
    <property type="project" value="UniProtKB-UniRule"/>
</dbReference>
<dbReference type="Gene3D" id="3.10.420.10">
    <property type="entry name" value="SecB-like"/>
    <property type="match status" value="1"/>
</dbReference>
<dbReference type="HAMAP" id="MF_00821">
    <property type="entry name" value="SecB"/>
    <property type="match status" value="1"/>
</dbReference>
<dbReference type="InterPro" id="IPR003708">
    <property type="entry name" value="SecB"/>
</dbReference>
<dbReference type="InterPro" id="IPR035958">
    <property type="entry name" value="SecB-like_sf"/>
</dbReference>
<dbReference type="NCBIfam" id="NF004393">
    <property type="entry name" value="PRK05751.1-4"/>
    <property type="match status" value="1"/>
</dbReference>
<dbReference type="NCBIfam" id="TIGR00809">
    <property type="entry name" value="secB"/>
    <property type="match status" value="1"/>
</dbReference>
<dbReference type="PANTHER" id="PTHR36918">
    <property type="match status" value="1"/>
</dbReference>
<dbReference type="PANTHER" id="PTHR36918:SF1">
    <property type="entry name" value="PROTEIN-EXPORT PROTEIN SECB"/>
    <property type="match status" value="1"/>
</dbReference>
<dbReference type="Pfam" id="PF02556">
    <property type="entry name" value="SecB"/>
    <property type="match status" value="1"/>
</dbReference>
<dbReference type="PRINTS" id="PR01594">
    <property type="entry name" value="SECBCHAPRONE"/>
</dbReference>
<dbReference type="SUPFAM" id="SSF54611">
    <property type="entry name" value="SecB-like"/>
    <property type="match status" value="1"/>
</dbReference>
<reference key="1">
    <citation type="journal article" date="2004" name="Proc. Natl. Acad. Sci. U.S.A.">
        <title>Genome sequence of the deep-sea gamma-proteobacterium Idiomarina loihiensis reveals amino acid fermentation as a source of carbon and energy.</title>
        <authorList>
            <person name="Hou S."/>
            <person name="Saw J.H."/>
            <person name="Lee K.S."/>
            <person name="Freitas T.A."/>
            <person name="Belisle C."/>
            <person name="Kawarabayasi Y."/>
            <person name="Donachie S.P."/>
            <person name="Pikina A."/>
            <person name="Galperin M.Y."/>
            <person name="Koonin E.V."/>
            <person name="Makarova K.S."/>
            <person name="Omelchenko M.V."/>
            <person name="Sorokin A."/>
            <person name="Wolf Y.I."/>
            <person name="Li Q.X."/>
            <person name="Keum Y.S."/>
            <person name="Campbell S."/>
            <person name="Denery J."/>
            <person name="Aizawa S."/>
            <person name="Shibata S."/>
            <person name="Malahoff A."/>
            <person name="Alam M."/>
        </authorList>
    </citation>
    <scope>NUCLEOTIDE SEQUENCE [LARGE SCALE GENOMIC DNA]</scope>
    <source>
        <strain>ATCC BAA-735 / DSM 15497 / L2-TR</strain>
    </source>
</reference>
<comment type="function">
    <text evidence="1">One of the proteins required for the normal export of preproteins out of the cell cytoplasm. It is a molecular chaperone that binds to a subset of precursor proteins, maintaining them in a translocation-competent state. It also specifically binds to its receptor SecA.</text>
</comment>
<comment type="subunit">
    <text evidence="1">Homotetramer, a dimer of dimers. One homotetramer interacts with 1 SecA dimer.</text>
</comment>
<comment type="subcellular location">
    <subcellularLocation>
        <location evidence="1">Cytoplasm</location>
    </subcellularLocation>
</comment>
<comment type="similarity">
    <text evidence="1">Belongs to the SecB family.</text>
</comment>
<organism>
    <name type="scientific">Idiomarina loihiensis (strain ATCC BAA-735 / DSM 15497 / L2-TR)</name>
    <dbReference type="NCBI Taxonomy" id="283942"/>
    <lineage>
        <taxon>Bacteria</taxon>
        <taxon>Pseudomonadati</taxon>
        <taxon>Pseudomonadota</taxon>
        <taxon>Gammaproteobacteria</taxon>
        <taxon>Alteromonadales</taxon>
        <taxon>Idiomarinaceae</taxon>
        <taxon>Idiomarina</taxon>
    </lineage>
</organism>
<proteinExistence type="inferred from homology"/>
<accession>Q5QZA7</accession>
<evidence type="ECO:0000255" key="1">
    <source>
        <dbReference type="HAMAP-Rule" id="MF_00821"/>
    </source>
</evidence>
<sequence length="167" mass="18738">MAEEQQANGAAAENQQQQVQFAIQRIYAKDISFETPSSPAIFRKEWKPDLKLDLNVKHEKIEDGVYEVVLTLTATNKVEDDVAFLCEVHQAGIFTIGEEVQDGQLAHMLGSFCPNILFPYARECVSNLVNRATFPQLNLAPVNFDAIFQRHMQQQAEQAQGQQTADA</sequence>
<feature type="chain" id="PRO_0000055380" description="Protein-export protein SecB">
    <location>
        <begin position="1"/>
        <end position="167"/>
    </location>
</feature>